<accession>A4TMN2</accession>
<gene>
    <name evidence="1" type="primary">dapA</name>
    <name type="ordered locus">YPDSF_2167</name>
</gene>
<comment type="function">
    <text evidence="1">Catalyzes the condensation of (S)-aspartate-beta-semialdehyde [(S)-ASA] and pyruvate to 4-hydroxy-tetrahydrodipicolinate (HTPA).</text>
</comment>
<comment type="catalytic activity">
    <reaction evidence="1">
        <text>L-aspartate 4-semialdehyde + pyruvate = (2S,4S)-4-hydroxy-2,3,4,5-tetrahydrodipicolinate + H2O + H(+)</text>
        <dbReference type="Rhea" id="RHEA:34171"/>
        <dbReference type="ChEBI" id="CHEBI:15361"/>
        <dbReference type="ChEBI" id="CHEBI:15377"/>
        <dbReference type="ChEBI" id="CHEBI:15378"/>
        <dbReference type="ChEBI" id="CHEBI:67139"/>
        <dbReference type="ChEBI" id="CHEBI:537519"/>
        <dbReference type="EC" id="4.3.3.7"/>
    </reaction>
</comment>
<comment type="pathway">
    <text evidence="1">Amino-acid biosynthesis; L-lysine biosynthesis via DAP pathway; (S)-tetrahydrodipicolinate from L-aspartate: step 3/4.</text>
</comment>
<comment type="subunit">
    <text evidence="1">Homotetramer; dimer of dimers.</text>
</comment>
<comment type="subcellular location">
    <subcellularLocation>
        <location evidence="1">Cytoplasm</location>
    </subcellularLocation>
</comment>
<comment type="similarity">
    <text evidence="1">Belongs to the DapA family.</text>
</comment>
<comment type="caution">
    <text evidence="2">Was originally thought to be a dihydrodipicolinate synthase (DHDPS), catalyzing the condensation of (S)-aspartate-beta-semialdehyde [(S)-ASA] and pyruvate to dihydrodipicolinate (DHDP). However, it was shown in E.coli that the product of the enzymatic reaction is not dihydrodipicolinate but in fact (4S)-4-hydroxy-2,3,4,5-tetrahydro-(2S)-dipicolinic acid (HTPA), and that the consecutive dehydration reaction leading to DHDP is not spontaneous but catalyzed by DapB.</text>
</comment>
<comment type="sequence caution" evidence="2">
    <conflict type="erroneous initiation">
        <sequence resource="EMBL-CDS" id="ABP40544"/>
    </conflict>
</comment>
<organism>
    <name type="scientific">Yersinia pestis (strain Pestoides F)</name>
    <dbReference type="NCBI Taxonomy" id="386656"/>
    <lineage>
        <taxon>Bacteria</taxon>
        <taxon>Pseudomonadati</taxon>
        <taxon>Pseudomonadota</taxon>
        <taxon>Gammaproteobacteria</taxon>
        <taxon>Enterobacterales</taxon>
        <taxon>Yersiniaceae</taxon>
        <taxon>Yersinia</taxon>
    </lineage>
</organism>
<evidence type="ECO:0000255" key="1">
    <source>
        <dbReference type="HAMAP-Rule" id="MF_00418"/>
    </source>
</evidence>
<evidence type="ECO:0000305" key="2"/>
<reference key="1">
    <citation type="submission" date="2007-02" db="EMBL/GenBank/DDBJ databases">
        <title>Complete sequence of chromosome of Yersinia pestis Pestoides F.</title>
        <authorList>
            <consortium name="US DOE Joint Genome Institute"/>
            <person name="Copeland A."/>
            <person name="Lucas S."/>
            <person name="Lapidus A."/>
            <person name="Barry K."/>
            <person name="Detter J.C."/>
            <person name="Glavina del Rio T."/>
            <person name="Hammon N."/>
            <person name="Israni S."/>
            <person name="Dalin E."/>
            <person name="Tice H."/>
            <person name="Pitluck S."/>
            <person name="Di Bartolo G."/>
            <person name="Chain P."/>
            <person name="Malfatti S."/>
            <person name="Shin M."/>
            <person name="Vergez L."/>
            <person name="Schmutz J."/>
            <person name="Larimer F."/>
            <person name="Land M."/>
            <person name="Hauser L."/>
            <person name="Worsham P."/>
            <person name="Chu M."/>
            <person name="Bearden S."/>
            <person name="Garcia E."/>
            <person name="Richardson P."/>
        </authorList>
    </citation>
    <scope>NUCLEOTIDE SEQUENCE [LARGE SCALE GENOMIC DNA]</scope>
    <source>
        <strain>Pestoides F</strain>
    </source>
</reference>
<keyword id="KW-0028">Amino-acid biosynthesis</keyword>
<keyword id="KW-0963">Cytoplasm</keyword>
<keyword id="KW-0220">Diaminopimelate biosynthesis</keyword>
<keyword id="KW-0456">Lyase</keyword>
<keyword id="KW-0457">Lysine biosynthesis</keyword>
<keyword id="KW-0704">Schiff base</keyword>
<sequence length="293" mass="31426">MFTGSIVALITPMDDNGDVDRASLKSLIDYHVASGTAAIVSVGTTGESATLNHDEHVDVVMQTLELADGRIPVIAGTGANSTSEAISLTQRFNDTGVVGCLTVTPYYNRPMQEGLYQHFKAIAESTDLPQILYNVPSRTGCDMLPPTIARLAKIKNIVAVKEATGNLSRVSQIQVLVDDEDFILLSGDDASGLDFMQLGGKGVISVTANIAAREMVELCALAAQGNFAEGRRLNQRLMPLHQHLFVEANPIPVKWAAKRLGLMANDTMRLPMTPLTDPAKRIVEDALKSAGLL</sequence>
<dbReference type="EC" id="4.3.3.7" evidence="1"/>
<dbReference type="EMBL" id="CP000668">
    <property type="protein sequence ID" value="ABP40544.1"/>
    <property type="status" value="ALT_INIT"/>
    <property type="molecule type" value="Genomic_DNA"/>
</dbReference>
<dbReference type="RefSeq" id="WP_002227834.1">
    <property type="nucleotide sequence ID" value="NZ_CP009715.1"/>
</dbReference>
<dbReference type="SMR" id="A4TMN2"/>
<dbReference type="GeneID" id="96666278"/>
<dbReference type="KEGG" id="ypp:YPDSF_2167"/>
<dbReference type="PATRIC" id="fig|386656.14.peg.3646"/>
<dbReference type="UniPathway" id="UPA00034">
    <property type="reaction ID" value="UER00017"/>
</dbReference>
<dbReference type="GO" id="GO:0005829">
    <property type="term" value="C:cytosol"/>
    <property type="evidence" value="ECO:0007669"/>
    <property type="project" value="TreeGrafter"/>
</dbReference>
<dbReference type="GO" id="GO:0008840">
    <property type="term" value="F:4-hydroxy-tetrahydrodipicolinate synthase activity"/>
    <property type="evidence" value="ECO:0007669"/>
    <property type="project" value="UniProtKB-UniRule"/>
</dbReference>
<dbReference type="GO" id="GO:0019877">
    <property type="term" value="P:diaminopimelate biosynthetic process"/>
    <property type="evidence" value="ECO:0007669"/>
    <property type="project" value="UniProtKB-UniRule"/>
</dbReference>
<dbReference type="GO" id="GO:0009089">
    <property type="term" value="P:lysine biosynthetic process via diaminopimelate"/>
    <property type="evidence" value="ECO:0007669"/>
    <property type="project" value="UniProtKB-UniRule"/>
</dbReference>
<dbReference type="CDD" id="cd00950">
    <property type="entry name" value="DHDPS"/>
    <property type="match status" value="1"/>
</dbReference>
<dbReference type="FunFam" id="3.20.20.70:FF:000046">
    <property type="entry name" value="4-hydroxy-tetrahydrodipicolinate synthase"/>
    <property type="match status" value="1"/>
</dbReference>
<dbReference type="Gene3D" id="3.20.20.70">
    <property type="entry name" value="Aldolase class I"/>
    <property type="match status" value="1"/>
</dbReference>
<dbReference type="HAMAP" id="MF_00418">
    <property type="entry name" value="DapA"/>
    <property type="match status" value="1"/>
</dbReference>
<dbReference type="InterPro" id="IPR013785">
    <property type="entry name" value="Aldolase_TIM"/>
</dbReference>
<dbReference type="InterPro" id="IPR005263">
    <property type="entry name" value="DapA"/>
</dbReference>
<dbReference type="InterPro" id="IPR002220">
    <property type="entry name" value="DapA-like"/>
</dbReference>
<dbReference type="InterPro" id="IPR020625">
    <property type="entry name" value="Schiff_base-form_aldolases_AS"/>
</dbReference>
<dbReference type="InterPro" id="IPR020624">
    <property type="entry name" value="Schiff_base-form_aldolases_CS"/>
</dbReference>
<dbReference type="NCBIfam" id="TIGR00674">
    <property type="entry name" value="dapA"/>
    <property type="match status" value="1"/>
</dbReference>
<dbReference type="PANTHER" id="PTHR12128:SF66">
    <property type="entry name" value="4-HYDROXY-2-OXOGLUTARATE ALDOLASE, MITOCHONDRIAL"/>
    <property type="match status" value="1"/>
</dbReference>
<dbReference type="PANTHER" id="PTHR12128">
    <property type="entry name" value="DIHYDRODIPICOLINATE SYNTHASE"/>
    <property type="match status" value="1"/>
</dbReference>
<dbReference type="Pfam" id="PF00701">
    <property type="entry name" value="DHDPS"/>
    <property type="match status" value="1"/>
</dbReference>
<dbReference type="PIRSF" id="PIRSF001365">
    <property type="entry name" value="DHDPS"/>
    <property type="match status" value="1"/>
</dbReference>
<dbReference type="PRINTS" id="PR00146">
    <property type="entry name" value="DHPICSNTHASE"/>
</dbReference>
<dbReference type="SMART" id="SM01130">
    <property type="entry name" value="DHDPS"/>
    <property type="match status" value="1"/>
</dbReference>
<dbReference type="SUPFAM" id="SSF51569">
    <property type="entry name" value="Aldolase"/>
    <property type="match status" value="1"/>
</dbReference>
<dbReference type="PROSITE" id="PS00665">
    <property type="entry name" value="DHDPS_1"/>
    <property type="match status" value="1"/>
</dbReference>
<dbReference type="PROSITE" id="PS00666">
    <property type="entry name" value="DHDPS_2"/>
    <property type="match status" value="1"/>
</dbReference>
<name>DAPA_YERPP</name>
<protein>
    <recommendedName>
        <fullName evidence="1">4-hydroxy-tetrahydrodipicolinate synthase</fullName>
        <shortName evidence="1">HTPA synthase</shortName>
        <ecNumber evidence="1">4.3.3.7</ecNumber>
    </recommendedName>
</protein>
<feature type="chain" id="PRO_0000340996" description="4-hydroxy-tetrahydrodipicolinate synthase">
    <location>
        <begin position="1"/>
        <end position="293"/>
    </location>
</feature>
<feature type="active site" description="Proton donor/acceptor" evidence="1">
    <location>
        <position position="133"/>
    </location>
</feature>
<feature type="active site" description="Schiff-base intermediate with substrate" evidence="1">
    <location>
        <position position="161"/>
    </location>
</feature>
<feature type="binding site" evidence="1">
    <location>
        <position position="45"/>
    </location>
    <ligand>
        <name>pyruvate</name>
        <dbReference type="ChEBI" id="CHEBI:15361"/>
    </ligand>
</feature>
<feature type="binding site" evidence="1">
    <location>
        <position position="204"/>
    </location>
    <ligand>
        <name>pyruvate</name>
        <dbReference type="ChEBI" id="CHEBI:15361"/>
    </ligand>
</feature>
<feature type="site" description="Part of a proton relay during catalysis" evidence="1">
    <location>
        <position position="44"/>
    </location>
</feature>
<feature type="site" description="Part of a proton relay during catalysis" evidence="1">
    <location>
        <position position="107"/>
    </location>
</feature>
<proteinExistence type="inferred from homology"/>